<comment type="catalytic activity">
    <reaction evidence="1">
        <text>(6S)-5,6,7,8-tetrahydrofolate + formate + ATP = (6R)-10-formyltetrahydrofolate + ADP + phosphate</text>
        <dbReference type="Rhea" id="RHEA:20221"/>
        <dbReference type="ChEBI" id="CHEBI:15740"/>
        <dbReference type="ChEBI" id="CHEBI:30616"/>
        <dbReference type="ChEBI" id="CHEBI:43474"/>
        <dbReference type="ChEBI" id="CHEBI:57453"/>
        <dbReference type="ChEBI" id="CHEBI:195366"/>
        <dbReference type="ChEBI" id="CHEBI:456216"/>
        <dbReference type="EC" id="6.3.4.3"/>
    </reaction>
</comment>
<comment type="pathway">
    <text evidence="1">One-carbon metabolism; tetrahydrofolate interconversion.</text>
</comment>
<comment type="similarity">
    <text evidence="1">Belongs to the formate--tetrahydrofolate ligase family.</text>
</comment>
<gene>
    <name evidence="1" type="primary">fhs</name>
    <name type="ordered locus">TTE2391</name>
</gene>
<reference key="1">
    <citation type="journal article" date="2002" name="Genome Res.">
        <title>A complete sequence of the T. tengcongensis genome.</title>
        <authorList>
            <person name="Bao Q."/>
            <person name="Tian Y."/>
            <person name="Li W."/>
            <person name="Xu Z."/>
            <person name="Xuan Z."/>
            <person name="Hu S."/>
            <person name="Dong W."/>
            <person name="Yang J."/>
            <person name="Chen Y."/>
            <person name="Xue Y."/>
            <person name="Xu Y."/>
            <person name="Lai X."/>
            <person name="Huang L."/>
            <person name="Dong X."/>
            <person name="Ma Y."/>
            <person name="Ling L."/>
            <person name="Tan H."/>
            <person name="Chen R."/>
            <person name="Wang J."/>
            <person name="Yu J."/>
            <person name="Yang H."/>
        </authorList>
    </citation>
    <scope>NUCLEOTIDE SEQUENCE [LARGE SCALE GENOMIC DNA]</scope>
    <source>
        <strain>DSM 15242 / JCM 11007 / NBRC 100824 / MB4</strain>
    </source>
</reference>
<sequence>MKSDIEIAQEAKMLHIRDVAAKLGIEEDYLEYYGKYKAKISPALWDKIKDRKDGKLILVTAITPTPAGEGKTTTTVGLGQALAKLGKKAMIALREPSLGPSFGIKGGAAGGGYSQVVPMEDINLHFTGDIHAITAAHNLLAAMIDNHIHHGNELNIDIRTITWKRAMDMNDRALREIIVGLGGKANGYPRQDGFIITVASEIMAILCLSHDLMDLKRRLGDIIVAYDKDGSPVTARDLKADGAMAVLLKDAIKPNLVQTIENVPAFVHGGPFANIAHGCNSLIATKYGLKLADYLVTEAGFGADLGAEKFFDVKARFGGLTPNAAVVVATVRALKMHGGVKKEDLQKEDVEAVRRGIENLEKQVENVRKFGVPVVVALNKFVFDTEREIEEVRKACDRIGVDMAVAEVWEKGGEGGIELAEKVIKAADTPSNFRFLYDVNLPIKDKLHIIATEIYGADGVEYTASALKDIANIEKLGLDKMPIVVAKTQYSLSDDPKLLGRPRGFKITVRELRISRGAGFIVALTGDIMTMPGLPKHPAAENIDIDENGRIKGLF</sequence>
<accession>Q8R7L3</accession>
<dbReference type="EC" id="6.3.4.3" evidence="1"/>
<dbReference type="EMBL" id="AE008691">
    <property type="protein sequence ID" value="AAM25530.1"/>
    <property type="molecule type" value="Genomic_DNA"/>
</dbReference>
<dbReference type="RefSeq" id="WP_011026422.1">
    <property type="nucleotide sequence ID" value="NC_003869.1"/>
</dbReference>
<dbReference type="SMR" id="Q8R7L3"/>
<dbReference type="STRING" id="273068.TTE2391"/>
<dbReference type="KEGG" id="tte:TTE2391"/>
<dbReference type="eggNOG" id="COG2759">
    <property type="taxonomic scope" value="Bacteria"/>
</dbReference>
<dbReference type="HOGENOM" id="CLU_003601_3_3_9"/>
<dbReference type="OrthoDB" id="9761733at2"/>
<dbReference type="BRENDA" id="6.3.4.3">
    <property type="organism ID" value="6784"/>
</dbReference>
<dbReference type="UniPathway" id="UPA00193"/>
<dbReference type="Proteomes" id="UP000000555">
    <property type="component" value="Chromosome"/>
</dbReference>
<dbReference type="GO" id="GO:0005524">
    <property type="term" value="F:ATP binding"/>
    <property type="evidence" value="ECO:0007669"/>
    <property type="project" value="UniProtKB-UniRule"/>
</dbReference>
<dbReference type="GO" id="GO:0004329">
    <property type="term" value="F:formate-tetrahydrofolate ligase activity"/>
    <property type="evidence" value="ECO:0007669"/>
    <property type="project" value="UniProtKB-UniRule"/>
</dbReference>
<dbReference type="GO" id="GO:0035999">
    <property type="term" value="P:tetrahydrofolate interconversion"/>
    <property type="evidence" value="ECO:0007669"/>
    <property type="project" value="UniProtKB-UniRule"/>
</dbReference>
<dbReference type="CDD" id="cd00477">
    <property type="entry name" value="FTHFS"/>
    <property type="match status" value="1"/>
</dbReference>
<dbReference type="FunFam" id="3.30.1510.10:FF:000001">
    <property type="entry name" value="Formate--tetrahydrofolate ligase"/>
    <property type="match status" value="1"/>
</dbReference>
<dbReference type="FunFam" id="3.10.410.10:FF:000001">
    <property type="entry name" value="Putative formate--tetrahydrofolate ligase"/>
    <property type="match status" value="1"/>
</dbReference>
<dbReference type="Gene3D" id="3.30.1510.10">
    <property type="entry name" value="Domain 2, N(10)-formyltetrahydrofolate synthetase"/>
    <property type="match status" value="1"/>
</dbReference>
<dbReference type="Gene3D" id="3.10.410.10">
    <property type="entry name" value="Formyltetrahydrofolate synthetase, domain 3"/>
    <property type="match status" value="1"/>
</dbReference>
<dbReference type="Gene3D" id="3.40.50.300">
    <property type="entry name" value="P-loop containing nucleotide triphosphate hydrolases"/>
    <property type="match status" value="1"/>
</dbReference>
<dbReference type="HAMAP" id="MF_01543">
    <property type="entry name" value="FTHFS"/>
    <property type="match status" value="1"/>
</dbReference>
<dbReference type="InterPro" id="IPR000559">
    <property type="entry name" value="Formate_THF_ligase"/>
</dbReference>
<dbReference type="InterPro" id="IPR020628">
    <property type="entry name" value="Formate_THF_ligase_CS"/>
</dbReference>
<dbReference type="InterPro" id="IPR027417">
    <property type="entry name" value="P-loop_NTPase"/>
</dbReference>
<dbReference type="NCBIfam" id="NF010030">
    <property type="entry name" value="PRK13505.1"/>
    <property type="match status" value="1"/>
</dbReference>
<dbReference type="Pfam" id="PF01268">
    <property type="entry name" value="FTHFS"/>
    <property type="match status" value="1"/>
</dbReference>
<dbReference type="SUPFAM" id="SSF52540">
    <property type="entry name" value="P-loop containing nucleoside triphosphate hydrolases"/>
    <property type="match status" value="1"/>
</dbReference>
<dbReference type="PROSITE" id="PS00721">
    <property type="entry name" value="FTHFS_1"/>
    <property type="match status" value="1"/>
</dbReference>
<dbReference type="PROSITE" id="PS00722">
    <property type="entry name" value="FTHFS_2"/>
    <property type="match status" value="1"/>
</dbReference>
<evidence type="ECO:0000255" key="1">
    <source>
        <dbReference type="HAMAP-Rule" id="MF_01543"/>
    </source>
</evidence>
<name>FTHS_CALS4</name>
<feature type="chain" id="PRO_0000199402" description="Formate--tetrahydrofolate ligase">
    <location>
        <begin position="1"/>
        <end position="555"/>
    </location>
</feature>
<feature type="binding site" evidence="1">
    <location>
        <begin position="65"/>
        <end position="72"/>
    </location>
    <ligand>
        <name>ATP</name>
        <dbReference type="ChEBI" id="CHEBI:30616"/>
    </ligand>
</feature>
<organism>
    <name type="scientific">Caldanaerobacter subterraneus subsp. tengcongensis (strain DSM 15242 / JCM 11007 / NBRC 100824 / MB4)</name>
    <name type="common">Thermoanaerobacter tengcongensis</name>
    <dbReference type="NCBI Taxonomy" id="273068"/>
    <lineage>
        <taxon>Bacteria</taxon>
        <taxon>Bacillati</taxon>
        <taxon>Bacillota</taxon>
        <taxon>Clostridia</taxon>
        <taxon>Thermoanaerobacterales</taxon>
        <taxon>Thermoanaerobacteraceae</taxon>
        <taxon>Caldanaerobacter</taxon>
    </lineage>
</organism>
<protein>
    <recommendedName>
        <fullName evidence="1">Formate--tetrahydrofolate ligase</fullName>
        <ecNumber evidence="1">6.3.4.3</ecNumber>
    </recommendedName>
    <alternativeName>
        <fullName evidence="1">Formyltetrahydrofolate synthetase</fullName>
        <shortName evidence="1">FHS</shortName>
        <shortName evidence="1">FTHFS</shortName>
    </alternativeName>
</protein>
<proteinExistence type="inferred from homology"/>
<keyword id="KW-0067">ATP-binding</keyword>
<keyword id="KW-0436">Ligase</keyword>
<keyword id="KW-0547">Nucleotide-binding</keyword>
<keyword id="KW-0554">One-carbon metabolism</keyword>
<keyword id="KW-1185">Reference proteome</keyword>